<dbReference type="EMBL" id="CP000720">
    <property type="protein sequence ID" value="ABS49012.1"/>
    <property type="molecule type" value="Genomic_DNA"/>
</dbReference>
<dbReference type="RefSeq" id="WP_002213337.1">
    <property type="nucleotide sequence ID" value="NC_009708.1"/>
</dbReference>
<dbReference type="SMR" id="A7FNL7"/>
<dbReference type="GeneID" id="82552805"/>
<dbReference type="KEGG" id="ypi:YpsIP31758_3897"/>
<dbReference type="HOGENOM" id="CLU_065898_2_2_6"/>
<dbReference type="Proteomes" id="UP000002412">
    <property type="component" value="Chromosome"/>
</dbReference>
<dbReference type="GO" id="GO:0015935">
    <property type="term" value="C:small ribosomal subunit"/>
    <property type="evidence" value="ECO:0007669"/>
    <property type="project" value="InterPro"/>
</dbReference>
<dbReference type="GO" id="GO:0019843">
    <property type="term" value="F:rRNA binding"/>
    <property type="evidence" value="ECO:0007669"/>
    <property type="project" value="UniProtKB-UniRule"/>
</dbReference>
<dbReference type="GO" id="GO:0003735">
    <property type="term" value="F:structural constituent of ribosome"/>
    <property type="evidence" value="ECO:0007669"/>
    <property type="project" value="InterPro"/>
</dbReference>
<dbReference type="GO" id="GO:0006412">
    <property type="term" value="P:translation"/>
    <property type="evidence" value="ECO:0007669"/>
    <property type="project" value="UniProtKB-UniRule"/>
</dbReference>
<dbReference type="FunFam" id="3.30.160.20:FF:000001">
    <property type="entry name" value="30S ribosomal protein S5"/>
    <property type="match status" value="1"/>
</dbReference>
<dbReference type="FunFam" id="3.30.230.10:FF:000002">
    <property type="entry name" value="30S ribosomal protein S5"/>
    <property type="match status" value="1"/>
</dbReference>
<dbReference type="Gene3D" id="3.30.160.20">
    <property type="match status" value="1"/>
</dbReference>
<dbReference type="Gene3D" id="3.30.230.10">
    <property type="match status" value="1"/>
</dbReference>
<dbReference type="HAMAP" id="MF_01307_B">
    <property type="entry name" value="Ribosomal_uS5_B"/>
    <property type="match status" value="1"/>
</dbReference>
<dbReference type="InterPro" id="IPR020568">
    <property type="entry name" value="Ribosomal_Su5_D2-typ_SF"/>
</dbReference>
<dbReference type="InterPro" id="IPR000851">
    <property type="entry name" value="Ribosomal_uS5"/>
</dbReference>
<dbReference type="InterPro" id="IPR005712">
    <property type="entry name" value="Ribosomal_uS5_bac-type"/>
</dbReference>
<dbReference type="InterPro" id="IPR005324">
    <property type="entry name" value="Ribosomal_uS5_C"/>
</dbReference>
<dbReference type="InterPro" id="IPR013810">
    <property type="entry name" value="Ribosomal_uS5_N"/>
</dbReference>
<dbReference type="InterPro" id="IPR018192">
    <property type="entry name" value="Ribosomal_uS5_N_CS"/>
</dbReference>
<dbReference type="InterPro" id="IPR014721">
    <property type="entry name" value="Ribsml_uS5_D2-typ_fold_subgr"/>
</dbReference>
<dbReference type="NCBIfam" id="TIGR01021">
    <property type="entry name" value="rpsE_bact"/>
    <property type="match status" value="1"/>
</dbReference>
<dbReference type="PANTHER" id="PTHR48277">
    <property type="entry name" value="MITOCHONDRIAL RIBOSOMAL PROTEIN S5"/>
    <property type="match status" value="1"/>
</dbReference>
<dbReference type="PANTHER" id="PTHR48277:SF1">
    <property type="entry name" value="MITOCHONDRIAL RIBOSOMAL PROTEIN S5"/>
    <property type="match status" value="1"/>
</dbReference>
<dbReference type="Pfam" id="PF00333">
    <property type="entry name" value="Ribosomal_S5"/>
    <property type="match status" value="1"/>
</dbReference>
<dbReference type="Pfam" id="PF03719">
    <property type="entry name" value="Ribosomal_S5_C"/>
    <property type="match status" value="1"/>
</dbReference>
<dbReference type="SUPFAM" id="SSF54768">
    <property type="entry name" value="dsRNA-binding domain-like"/>
    <property type="match status" value="1"/>
</dbReference>
<dbReference type="SUPFAM" id="SSF54211">
    <property type="entry name" value="Ribosomal protein S5 domain 2-like"/>
    <property type="match status" value="1"/>
</dbReference>
<dbReference type="PROSITE" id="PS00585">
    <property type="entry name" value="RIBOSOMAL_S5"/>
    <property type="match status" value="1"/>
</dbReference>
<dbReference type="PROSITE" id="PS50881">
    <property type="entry name" value="S5_DSRBD"/>
    <property type="match status" value="1"/>
</dbReference>
<name>RS5_YERP3</name>
<proteinExistence type="inferred from homology"/>
<gene>
    <name evidence="1" type="primary">rpsE</name>
    <name type="ordered locus">YpsIP31758_3897</name>
</gene>
<sequence length="167" mass="17533">MSHIEKQAGELQEKLIAVNRVSKTVKGGRIFSFTALTVVGDGNGRVGFGYGKAREVPAAIQKAMEKARRAMINVALNNGTLQHPVKGAHTGSRVFMQPASEGTGIIAGGAMRAVLEVAGVHNVLAKAYGSTNPINVVRATIAALEDMKSPEMVAAKRGKSVEEILGK</sequence>
<reference key="1">
    <citation type="journal article" date="2007" name="PLoS Genet.">
        <title>The complete genome sequence of Yersinia pseudotuberculosis IP31758, the causative agent of Far East scarlet-like fever.</title>
        <authorList>
            <person name="Eppinger M."/>
            <person name="Rosovitz M.J."/>
            <person name="Fricke W.F."/>
            <person name="Rasko D.A."/>
            <person name="Kokorina G."/>
            <person name="Fayolle C."/>
            <person name="Lindler L.E."/>
            <person name="Carniel E."/>
            <person name="Ravel J."/>
        </authorList>
    </citation>
    <scope>NUCLEOTIDE SEQUENCE [LARGE SCALE GENOMIC DNA]</scope>
    <source>
        <strain>IP 31758</strain>
    </source>
</reference>
<feature type="chain" id="PRO_1000086075" description="Small ribosomal subunit protein uS5">
    <location>
        <begin position="1"/>
        <end position="167"/>
    </location>
</feature>
<feature type="domain" description="S5 DRBM" evidence="1">
    <location>
        <begin position="11"/>
        <end position="74"/>
    </location>
</feature>
<accession>A7FNL7</accession>
<keyword id="KW-0687">Ribonucleoprotein</keyword>
<keyword id="KW-0689">Ribosomal protein</keyword>
<keyword id="KW-0694">RNA-binding</keyword>
<keyword id="KW-0699">rRNA-binding</keyword>
<evidence type="ECO:0000255" key="1">
    <source>
        <dbReference type="HAMAP-Rule" id="MF_01307"/>
    </source>
</evidence>
<evidence type="ECO:0000305" key="2"/>
<comment type="function">
    <text evidence="1">With S4 and S12 plays an important role in translational accuracy.</text>
</comment>
<comment type="function">
    <text evidence="1">Located at the back of the 30S subunit body where it stabilizes the conformation of the head with respect to the body.</text>
</comment>
<comment type="subunit">
    <text evidence="1">Part of the 30S ribosomal subunit. Contacts proteins S4 and S8.</text>
</comment>
<comment type="domain">
    <text>The N-terminal domain interacts with the head of the 30S subunit; the C-terminal domain interacts with the body and contacts protein S4. The interaction surface between S4 and S5 is involved in control of translational fidelity.</text>
</comment>
<comment type="similarity">
    <text evidence="1">Belongs to the universal ribosomal protein uS5 family.</text>
</comment>
<protein>
    <recommendedName>
        <fullName evidence="1">Small ribosomal subunit protein uS5</fullName>
    </recommendedName>
    <alternativeName>
        <fullName evidence="2">30S ribosomal protein S5</fullName>
    </alternativeName>
</protein>
<organism>
    <name type="scientific">Yersinia pseudotuberculosis serotype O:1b (strain IP 31758)</name>
    <dbReference type="NCBI Taxonomy" id="349747"/>
    <lineage>
        <taxon>Bacteria</taxon>
        <taxon>Pseudomonadati</taxon>
        <taxon>Pseudomonadota</taxon>
        <taxon>Gammaproteobacteria</taxon>
        <taxon>Enterobacterales</taxon>
        <taxon>Yersiniaceae</taxon>
        <taxon>Yersinia</taxon>
    </lineage>
</organism>